<protein>
    <recommendedName>
        <fullName evidence="1">Lipoprotein-releasing system ATP-binding protein LolD</fullName>
        <ecNumber evidence="1">7.6.2.-</ecNumber>
    </recommendedName>
</protein>
<name>LOLD_BRADU</name>
<gene>
    <name evidence="1" type="primary">lolD</name>
    <name type="ordered locus">bll4875</name>
</gene>
<comment type="function">
    <text evidence="1">Part of the ABC transporter complex LolCDE involved in the translocation of mature outer membrane-directed lipoproteins, from the inner membrane to the periplasmic chaperone, LolA. Responsible for the formation of the LolA-lipoprotein complex in an ATP-dependent manner.</text>
</comment>
<comment type="subunit">
    <text evidence="1">The complex is composed of two ATP-binding proteins (LolD) and two transmembrane proteins (LolC and LolE).</text>
</comment>
<comment type="subcellular location">
    <subcellularLocation>
        <location evidence="1">Cell inner membrane</location>
        <topology evidence="1">Peripheral membrane protein</topology>
    </subcellularLocation>
</comment>
<comment type="similarity">
    <text evidence="1">Belongs to the ABC transporter superfamily. Lipoprotein translocase (TC 3.A.1.125) family.</text>
</comment>
<organism>
    <name type="scientific">Bradyrhizobium diazoefficiens (strain JCM 10833 / BCRC 13528 / IAM 13628 / NBRC 14792 / USDA 110)</name>
    <dbReference type="NCBI Taxonomy" id="224911"/>
    <lineage>
        <taxon>Bacteria</taxon>
        <taxon>Pseudomonadati</taxon>
        <taxon>Pseudomonadota</taxon>
        <taxon>Alphaproteobacteria</taxon>
        <taxon>Hyphomicrobiales</taxon>
        <taxon>Nitrobacteraceae</taxon>
        <taxon>Bradyrhizobium</taxon>
    </lineage>
</organism>
<keyword id="KW-0067">ATP-binding</keyword>
<keyword id="KW-0997">Cell inner membrane</keyword>
<keyword id="KW-1003">Cell membrane</keyword>
<keyword id="KW-0472">Membrane</keyword>
<keyword id="KW-0547">Nucleotide-binding</keyword>
<keyword id="KW-1185">Reference proteome</keyword>
<keyword id="KW-1278">Translocase</keyword>
<keyword id="KW-0813">Transport</keyword>
<sequence>MEQQQGAEDVPVIYLHEIKRQYLQGEVPLTILDGAKLALWAGQSVALVAPSGSGKSTLLHIAGLLEAPDSGEVYVNGAPTSQLPDIERTQLRRTDIGFVYQSHRLLPEFSALENVMLPQMIRGLKKSESVKRAKEILGYLGLGDRITHRPAELSGGEQQRVAIARAVANAPRVLFADEPTGNLDPHTADHVFQALMQLVKATRVSMLIATHNMELAGRMDRRVSLSDGQVVELE</sequence>
<proteinExistence type="inferred from homology"/>
<accession>Q89KN0</accession>
<evidence type="ECO:0000255" key="1">
    <source>
        <dbReference type="HAMAP-Rule" id="MF_01708"/>
    </source>
</evidence>
<reference key="1">
    <citation type="journal article" date="2002" name="DNA Res.">
        <title>Complete genomic sequence of nitrogen-fixing symbiotic bacterium Bradyrhizobium japonicum USDA110.</title>
        <authorList>
            <person name="Kaneko T."/>
            <person name="Nakamura Y."/>
            <person name="Sato S."/>
            <person name="Minamisawa K."/>
            <person name="Uchiumi T."/>
            <person name="Sasamoto S."/>
            <person name="Watanabe A."/>
            <person name="Idesawa K."/>
            <person name="Iriguchi M."/>
            <person name="Kawashima K."/>
            <person name="Kohara M."/>
            <person name="Matsumoto M."/>
            <person name="Shimpo S."/>
            <person name="Tsuruoka H."/>
            <person name="Wada T."/>
            <person name="Yamada M."/>
            <person name="Tabata S."/>
        </authorList>
    </citation>
    <scope>NUCLEOTIDE SEQUENCE [LARGE SCALE GENOMIC DNA]</scope>
    <source>
        <strain>JCM 10833 / BCRC 13528 / IAM 13628 / NBRC 14792 / USDA 110</strain>
    </source>
</reference>
<feature type="chain" id="PRO_0000092422" description="Lipoprotein-releasing system ATP-binding protein LolD">
    <location>
        <begin position="1"/>
        <end position="234"/>
    </location>
</feature>
<feature type="domain" description="ABC transporter" evidence="1">
    <location>
        <begin position="13"/>
        <end position="233"/>
    </location>
</feature>
<feature type="binding site" evidence="1">
    <location>
        <begin position="49"/>
        <end position="56"/>
    </location>
    <ligand>
        <name>ATP</name>
        <dbReference type="ChEBI" id="CHEBI:30616"/>
    </ligand>
</feature>
<dbReference type="EC" id="7.6.2.-" evidence="1"/>
<dbReference type="EMBL" id="BA000040">
    <property type="protein sequence ID" value="BAC50140.1"/>
    <property type="molecule type" value="Genomic_DNA"/>
</dbReference>
<dbReference type="RefSeq" id="NP_771515.1">
    <property type="nucleotide sequence ID" value="NC_004463.1"/>
</dbReference>
<dbReference type="RefSeq" id="WP_011087642.1">
    <property type="nucleotide sequence ID" value="NC_004463.1"/>
</dbReference>
<dbReference type="SMR" id="Q89KN0"/>
<dbReference type="FunCoup" id="Q89KN0">
    <property type="interactions" value="467"/>
</dbReference>
<dbReference type="STRING" id="224911.AAV28_21695"/>
<dbReference type="EnsemblBacteria" id="BAC50140">
    <property type="protein sequence ID" value="BAC50140"/>
    <property type="gene ID" value="BAC50140"/>
</dbReference>
<dbReference type="GeneID" id="46491880"/>
<dbReference type="KEGG" id="bja:bll4875"/>
<dbReference type="PATRIC" id="fig|224911.44.peg.4723"/>
<dbReference type="eggNOG" id="COG1136">
    <property type="taxonomic scope" value="Bacteria"/>
</dbReference>
<dbReference type="HOGENOM" id="CLU_000604_1_22_5"/>
<dbReference type="InParanoid" id="Q89KN0"/>
<dbReference type="OrthoDB" id="9786950at2"/>
<dbReference type="PhylomeDB" id="Q89KN0"/>
<dbReference type="Proteomes" id="UP000002526">
    <property type="component" value="Chromosome"/>
</dbReference>
<dbReference type="GO" id="GO:0005886">
    <property type="term" value="C:plasma membrane"/>
    <property type="evidence" value="ECO:0000318"/>
    <property type="project" value="GO_Central"/>
</dbReference>
<dbReference type="GO" id="GO:0005524">
    <property type="term" value="F:ATP binding"/>
    <property type="evidence" value="ECO:0007669"/>
    <property type="project" value="UniProtKB-KW"/>
</dbReference>
<dbReference type="GO" id="GO:0016887">
    <property type="term" value="F:ATP hydrolysis activity"/>
    <property type="evidence" value="ECO:0007669"/>
    <property type="project" value="InterPro"/>
</dbReference>
<dbReference type="GO" id="GO:0022857">
    <property type="term" value="F:transmembrane transporter activity"/>
    <property type="evidence" value="ECO:0000318"/>
    <property type="project" value="GO_Central"/>
</dbReference>
<dbReference type="GO" id="GO:0044874">
    <property type="term" value="P:lipoprotein localization to outer membrane"/>
    <property type="evidence" value="ECO:0000318"/>
    <property type="project" value="GO_Central"/>
</dbReference>
<dbReference type="GO" id="GO:0089705">
    <property type="term" value="P:protein localization to outer membrane"/>
    <property type="evidence" value="ECO:0000318"/>
    <property type="project" value="GO_Central"/>
</dbReference>
<dbReference type="GO" id="GO:0055085">
    <property type="term" value="P:transmembrane transport"/>
    <property type="evidence" value="ECO:0000318"/>
    <property type="project" value="GO_Central"/>
</dbReference>
<dbReference type="CDD" id="cd03255">
    <property type="entry name" value="ABC_MJ0796_LolCDE_FtsE"/>
    <property type="match status" value="1"/>
</dbReference>
<dbReference type="FunFam" id="3.40.50.300:FF:000032">
    <property type="entry name" value="Export ABC transporter ATP-binding protein"/>
    <property type="match status" value="1"/>
</dbReference>
<dbReference type="Gene3D" id="3.40.50.300">
    <property type="entry name" value="P-loop containing nucleotide triphosphate hydrolases"/>
    <property type="match status" value="1"/>
</dbReference>
<dbReference type="InterPro" id="IPR003593">
    <property type="entry name" value="AAA+_ATPase"/>
</dbReference>
<dbReference type="InterPro" id="IPR003439">
    <property type="entry name" value="ABC_transporter-like_ATP-bd"/>
</dbReference>
<dbReference type="InterPro" id="IPR017871">
    <property type="entry name" value="ABC_transporter-like_CS"/>
</dbReference>
<dbReference type="InterPro" id="IPR015854">
    <property type="entry name" value="ABC_transpr_LolD-like"/>
</dbReference>
<dbReference type="InterPro" id="IPR017911">
    <property type="entry name" value="MacB-like_ATP-bd"/>
</dbReference>
<dbReference type="InterPro" id="IPR027417">
    <property type="entry name" value="P-loop_NTPase"/>
</dbReference>
<dbReference type="PANTHER" id="PTHR24220">
    <property type="entry name" value="IMPORT ATP-BINDING PROTEIN"/>
    <property type="match status" value="1"/>
</dbReference>
<dbReference type="PANTHER" id="PTHR24220:SF689">
    <property type="entry name" value="LIPOPROTEIN-RELEASING SYSTEM ATP-BINDING PROTEIN LOLD"/>
    <property type="match status" value="1"/>
</dbReference>
<dbReference type="Pfam" id="PF00005">
    <property type="entry name" value="ABC_tran"/>
    <property type="match status" value="1"/>
</dbReference>
<dbReference type="SMART" id="SM00382">
    <property type="entry name" value="AAA"/>
    <property type="match status" value="1"/>
</dbReference>
<dbReference type="SUPFAM" id="SSF52540">
    <property type="entry name" value="P-loop containing nucleoside triphosphate hydrolases"/>
    <property type="match status" value="1"/>
</dbReference>
<dbReference type="PROSITE" id="PS00211">
    <property type="entry name" value="ABC_TRANSPORTER_1"/>
    <property type="match status" value="1"/>
</dbReference>
<dbReference type="PROSITE" id="PS50893">
    <property type="entry name" value="ABC_TRANSPORTER_2"/>
    <property type="match status" value="1"/>
</dbReference>
<dbReference type="PROSITE" id="PS51244">
    <property type="entry name" value="LOLD"/>
    <property type="match status" value="1"/>
</dbReference>